<evidence type="ECO:0000255" key="1">
    <source>
        <dbReference type="HAMAP-Rule" id="MF_01013"/>
    </source>
</evidence>
<proteinExistence type="inferred from homology"/>
<reference key="1">
    <citation type="journal article" date="2009" name="Genome Biol.">
        <title>Genomic and genetic analyses of diversity and plant interactions of Pseudomonas fluorescens.</title>
        <authorList>
            <person name="Silby M.W."/>
            <person name="Cerdeno-Tarraga A.M."/>
            <person name="Vernikos G.S."/>
            <person name="Giddens S.R."/>
            <person name="Jackson R.W."/>
            <person name="Preston G.M."/>
            <person name="Zhang X.-X."/>
            <person name="Moon C.D."/>
            <person name="Gehrig S.M."/>
            <person name="Godfrey S.A.C."/>
            <person name="Knight C.G."/>
            <person name="Malone J.G."/>
            <person name="Robinson Z."/>
            <person name="Spiers A.J."/>
            <person name="Harris S."/>
            <person name="Challis G.L."/>
            <person name="Yaxley A.M."/>
            <person name="Harris D."/>
            <person name="Seeger K."/>
            <person name="Murphy L."/>
            <person name="Rutter S."/>
            <person name="Squares R."/>
            <person name="Quail M.A."/>
            <person name="Saunders E."/>
            <person name="Mavromatis K."/>
            <person name="Brettin T.S."/>
            <person name="Bentley S.D."/>
            <person name="Hothersall J."/>
            <person name="Stephens E."/>
            <person name="Thomas C.M."/>
            <person name="Parkhill J."/>
            <person name="Levy S.B."/>
            <person name="Rainey P.B."/>
            <person name="Thomson N.R."/>
        </authorList>
    </citation>
    <scope>NUCLEOTIDE SEQUENCE [LARGE SCALE GENOMIC DNA]</scope>
    <source>
        <strain>Pf0-1</strain>
    </source>
</reference>
<accession>Q3KJI5</accession>
<feature type="chain" id="PRO_0000230133" description="Imidazole glycerol phosphate synthase subunit HisF">
    <location>
        <begin position="1"/>
        <end position="256"/>
    </location>
</feature>
<feature type="active site" evidence="1">
    <location>
        <position position="12"/>
    </location>
</feature>
<feature type="active site" evidence="1">
    <location>
        <position position="131"/>
    </location>
</feature>
<sequence length="256" mass="27275">MALAKRIIPCLDVDNGRVVKGVKFENIRDAGDPVEIARRYDEQGADEITFLDITASVDGRDTTLHTVERMASQVFIPLTVGGGVRTVQDIRNLLNAGADKVSINTAAVFNPEFVGEAAQHFGSQCIVVAIDAKKVSGPGETPRWEIFTHGGRKPTGLDAVEWAKKMEGLGAGEILLTSMDQDGMKNGFDLGVTRAISDALGIPVIASGGVGNLQHLADGILEGHASAVLAASIFHFGEYTVQEAKAYMSKRGIVMR</sequence>
<dbReference type="EC" id="4.3.2.10" evidence="1"/>
<dbReference type="EMBL" id="CP000094">
    <property type="protein sequence ID" value="ABA72071.1"/>
    <property type="molecule type" value="Genomic_DNA"/>
</dbReference>
<dbReference type="RefSeq" id="WP_011332020.1">
    <property type="nucleotide sequence ID" value="NC_007492.2"/>
</dbReference>
<dbReference type="SMR" id="Q3KJI5"/>
<dbReference type="KEGG" id="pfo:Pfl01_0327"/>
<dbReference type="eggNOG" id="COG0107">
    <property type="taxonomic scope" value="Bacteria"/>
</dbReference>
<dbReference type="HOGENOM" id="CLU_048577_4_0_6"/>
<dbReference type="UniPathway" id="UPA00031">
    <property type="reaction ID" value="UER00010"/>
</dbReference>
<dbReference type="Proteomes" id="UP000002704">
    <property type="component" value="Chromosome"/>
</dbReference>
<dbReference type="GO" id="GO:0005737">
    <property type="term" value="C:cytoplasm"/>
    <property type="evidence" value="ECO:0007669"/>
    <property type="project" value="UniProtKB-SubCell"/>
</dbReference>
<dbReference type="GO" id="GO:0000107">
    <property type="term" value="F:imidazoleglycerol-phosphate synthase activity"/>
    <property type="evidence" value="ECO:0007669"/>
    <property type="project" value="UniProtKB-UniRule"/>
</dbReference>
<dbReference type="GO" id="GO:0016829">
    <property type="term" value="F:lyase activity"/>
    <property type="evidence" value="ECO:0007669"/>
    <property type="project" value="UniProtKB-KW"/>
</dbReference>
<dbReference type="GO" id="GO:0000105">
    <property type="term" value="P:L-histidine biosynthetic process"/>
    <property type="evidence" value="ECO:0007669"/>
    <property type="project" value="UniProtKB-UniRule"/>
</dbReference>
<dbReference type="CDD" id="cd04731">
    <property type="entry name" value="HisF"/>
    <property type="match status" value="1"/>
</dbReference>
<dbReference type="FunFam" id="3.20.20.70:FF:000006">
    <property type="entry name" value="Imidazole glycerol phosphate synthase subunit HisF"/>
    <property type="match status" value="1"/>
</dbReference>
<dbReference type="Gene3D" id="3.20.20.70">
    <property type="entry name" value="Aldolase class I"/>
    <property type="match status" value="1"/>
</dbReference>
<dbReference type="HAMAP" id="MF_01013">
    <property type="entry name" value="HisF"/>
    <property type="match status" value="1"/>
</dbReference>
<dbReference type="InterPro" id="IPR013785">
    <property type="entry name" value="Aldolase_TIM"/>
</dbReference>
<dbReference type="InterPro" id="IPR006062">
    <property type="entry name" value="His_biosynth"/>
</dbReference>
<dbReference type="InterPro" id="IPR004651">
    <property type="entry name" value="HisF"/>
</dbReference>
<dbReference type="InterPro" id="IPR050064">
    <property type="entry name" value="IGPS_HisA/HisF"/>
</dbReference>
<dbReference type="InterPro" id="IPR011060">
    <property type="entry name" value="RibuloseP-bd_barrel"/>
</dbReference>
<dbReference type="NCBIfam" id="TIGR00735">
    <property type="entry name" value="hisF"/>
    <property type="match status" value="1"/>
</dbReference>
<dbReference type="PANTHER" id="PTHR21235:SF2">
    <property type="entry name" value="IMIDAZOLE GLYCEROL PHOSPHATE SYNTHASE HISHF"/>
    <property type="match status" value="1"/>
</dbReference>
<dbReference type="PANTHER" id="PTHR21235">
    <property type="entry name" value="IMIDAZOLE GLYCEROL PHOSPHATE SYNTHASE SUBUNIT HISF/H IGP SYNTHASE SUBUNIT HISF/H"/>
    <property type="match status" value="1"/>
</dbReference>
<dbReference type="Pfam" id="PF00977">
    <property type="entry name" value="His_biosynth"/>
    <property type="match status" value="1"/>
</dbReference>
<dbReference type="SUPFAM" id="SSF51366">
    <property type="entry name" value="Ribulose-phoshate binding barrel"/>
    <property type="match status" value="1"/>
</dbReference>
<organism>
    <name type="scientific">Pseudomonas fluorescens (strain Pf0-1)</name>
    <dbReference type="NCBI Taxonomy" id="205922"/>
    <lineage>
        <taxon>Bacteria</taxon>
        <taxon>Pseudomonadati</taxon>
        <taxon>Pseudomonadota</taxon>
        <taxon>Gammaproteobacteria</taxon>
        <taxon>Pseudomonadales</taxon>
        <taxon>Pseudomonadaceae</taxon>
        <taxon>Pseudomonas</taxon>
    </lineage>
</organism>
<name>HIS6_PSEPF</name>
<gene>
    <name evidence="1" type="primary">hisF</name>
    <name type="ordered locus">Pfl01_0327</name>
</gene>
<keyword id="KW-0028">Amino-acid biosynthesis</keyword>
<keyword id="KW-0963">Cytoplasm</keyword>
<keyword id="KW-0368">Histidine biosynthesis</keyword>
<keyword id="KW-0456">Lyase</keyword>
<comment type="function">
    <text evidence="1">IGPS catalyzes the conversion of PRFAR and glutamine to IGP, AICAR and glutamate. The HisF subunit catalyzes the cyclization activity that produces IGP and AICAR from PRFAR using the ammonia provided by the HisH subunit.</text>
</comment>
<comment type="catalytic activity">
    <reaction evidence="1">
        <text>5-[(5-phospho-1-deoxy-D-ribulos-1-ylimino)methylamino]-1-(5-phospho-beta-D-ribosyl)imidazole-4-carboxamide + L-glutamine = D-erythro-1-(imidazol-4-yl)glycerol 3-phosphate + 5-amino-1-(5-phospho-beta-D-ribosyl)imidazole-4-carboxamide + L-glutamate + H(+)</text>
        <dbReference type="Rhea" id="RHEA:24793"/>
        <dbReference type="ChEBI" id="CHEBI:15378"/>
        <dbReference type="ChEBI" id="CHEBI:29985"/>
        <dbReference type="ChEBI" id="CHEBI:58278"/>
        <dbReference type="ChEBI" id="CHEBI:58359"/>
        <dbReference type="ChEBI" id="CHEBI:58475"/>
        <dbReference type="ChEBI" id="CHEBI:58525"/>
        <dbReference type="EC" id="4.3.2.10"/>
    </reaction>
</comment>
<comment type="pathway">
    <text evidence="1">Amino-acid biosynthesis; L-histidine biosynthesis; L-histidine from 5-phospho-alpha-D-ribose 1-diphosphate: step 5/9.</text>
</comment>
<comment type="subunit">
    <text evidence="1">Heterodimer of HisH and HisF.</text>
</comment>
<comment type="subcellular location">
    <subcellularLocation>
        <location evidence="1">Cytoplasm</location>
    </subcellularLocation>
</comment>
<comment type="similarity">
    <text evidence="1">Belongs to the HisA/HisF family.</text>
</comment>
<protein>
    <recommendedName>
        <fullName evidence="1">Imidazole glycerol phosphate synthase subunit HisF</fullName>
        <ecNumber evidence="1">4.3.2.10</ecNumber>
    </recommendedName>
    <alternativeName>
        <fullName evidence="1">IGP synthase cyclase subunit</fullName>
    </alternativeName>
    <alternativeName>
        <fullName evidence="1">IGP synthase subunit HisF</fullName>
    </alternativeName>
    <alternativeName>
        <fullName evidence="1">ImGP synthase subunit HisF</fullName>
        <shortName evidence="1">IGPS subunit HisF</shortName>
    </alternativeName>
</protein>